<evidence type="ECO:0000255" key="1">
    <source>
        <dbReference type="HAMAP-Rule" id="MF_01302"/>
    </source>
</evidence>
<evidence type="ECO:0000305" key="2"/>
<dbReference type="EMBL" id="CU633749">
    <property type="protein sequence ID" value="CAQ70854.1"/>
    <property type="molecule type" value="Genomic_DNA"/>
</dbReference>
<dbReference type="RefSeq" id="WP_010812384.1">
    <property type="nucleotide sequence ID" value="NC_010528.1"/>
</dbReference>
<dbReference type="SMR" id="B3R7F4"/>
<dbReference type="GeneID" id="34310256"/>
<dbReference type="KEGG" id="cti:RALTA_A2929"/>
<dbReference type="eggNOG" id="COG0096">
    <property type="taxonomic scope" value="Bacteria"/>
</dbReference>
<dbReference type="HOGENOM" id="CLU_098428_0_0_4"/>
<dbReference type="BioCyc" id="CTAI977880:RALTA_RS14285-MONOMER"/>
<dbReference type="Proteomes" id="UP000001692">
    <property type="component" value="Chromosome 1"/>
</dbReference>
<dbReference type="GO" id="GO:1990904">
    <property type="term" value="C:ribonucleoprotein complex"/>
    <property type="evidence" value="ECO:0007669"/>
    <property type="project" value="UniProtKB-KW"/>
</dbReference>
<dbReference type="GO" id="GO:0005840">
    <property type="term" value="C:ribosome"/>
    <property type="evidence" value="ECO:0007669"/>
    <property type="project" value="UniProtKB-KW"/>
</dbReference>
<dbReference type="GO" id="GO:0019843">
    <property type="term" value="F:rRNA binding"/>
    <property type="evidence" value="ECO:0007669"/>
    <property type="project" value="UniProtKB-UniRule"/>
</dbReference>
<dbReference type="GO" id="GO:0003735">
    <property type="term" value="F:structural constituent of ribosome"/>
    <property type="evidence" value="ECO:0007669"/>
    <property type="project" value="InterPro"/>
</dbReference>
<dbReference type="GO" id="GO:0006412">
    <property type="term" value="P:translation"/>
    <property type="evidence" value="ECO:0007669"/>
    <property type="project" value="UniProtKB-UniRule"/>
</dbReference>
<dbReference type="FunFam" id="3.30.1370.30:FF:000002">
    <property type="entry name" value="30S ribosomal protein S8"/>
    <property type="match status" value="1"/>
</dbReference>
<dbReference type="FunFam" id="3.30.1490.10:FF:000001">
    <property type="entry name" value="30S ribosomal protein S8"/>
    <property type="match status" value="1"/>
</dbReference>
<dbReference type="Gene3D" id="3.30.1370.30">
    <property type="match status" value="1"/>
</dbReference>
<dbReference type="Gene3D" id="3.30.1490.10">
    <property type="match status" value="1"/>
</dbReference>
<dbReference type="HAMAP" id="MF_01302_B">
    <property type="entry name" value="Ribosomal_uS8_B"/>
    <property type="match status" value="1"/>
</dbReference>
<dbReference type="InterPro" id="IPR000630">
    <property type="entry name" value="Ribosomal_uS8"/>
</dbReference>
<dbReference type="InterPro" id="IPR047863">
    <property type="entry name" value="Ribosomal_uS8_CS"/>
</dbReference>
<dbReference type="InterPro" id="IPR035987">
    <property type="entry name" value="Ribosomal_uS8_sf"/>
</dbReference>
<dbReference type="NCBIfam" id="NF001109">
    <property type="entry name" value="PRK00136.1"/>
    <property type="match status" value="1"/>
</dbReference>
<dbReference type="PANTHER" id="PTHR11758">
    <property type="entry name" value="40S RIBOSOMAL PROTEIN S15A"/>
    <property type="match status" value="1"/>
</dbReference>
<dbReference type="Pfam" id="PF00410">
    <property type="entry name" value="Ribosomal_S8"/>
    <property type="match status" value="1"/>
</dbReference>
<dbReference type="SUPFAM" id="SSF56047">
    <property type="entry name" value="Ribosomal protein S8"/>
    <property type="match status" value="1"/>
</dbReference>
<dbReference type="PROSITE" id="PS00053">
    <property type="entry name" value="RIBOSOMAL_S8"/>
    <property type="match status" value="1"/>
</dbReference>
<feature type="chain" id="PRO_1000140540" description="Small ribosomal subunit protein uS8">
    <location>
        <begin position="1"/>
        <end position="131"/>
    </location>
</feature>
<protein>
    <recommendedName>
        <fullName evidence="1">Small ribosomal subunit protein uS8</fullName>
    </recommendedName>
    <alternativeName>
        <fullName evidence="2">30S ribosomal protein S8</fullName>
    </alternativeName>
</protein>
<reference key="1">
    <citation type="journal article" date="2008" name="Genome Res.">
        <title>Genome sequence of the beta-rhizobium Cupriavidus taiwanensis and comparative genomics of rhizobia.</title>
        <authorList>
            <person name="Amadou C."/>
            <person name="Pascal G."/>
            <person name="Mangenot S."/>
            <person name="Glew M."/>
            <person name="Bontemps C."/>
            <person name="Capela D."/>
            <person name="Carrere S."/>
            <person name="Cruveiller S."/>
            <person name="Dossat C."/>
            <person name="Lajus A."/>
            <person name="Marchetti M."/>
            <person name="Poinsot V."/>
            <person name="Rouy Z."/>
            <person name="Servin B."/>
            <person name="Saad M."/>
            <person name="Schenowitz C."/>
            <person name="Barbe V."/>
            <person name="Batut J."/>
            <person name="Medigue C."/>
            <person name="Masson-Boivin C."/>
        </authorList>
    </citation>
    <scope>NUCLEOTIDE SEQUENCE [LARGE SCALE GENOMIC DNA]</scope>
    <source>
        <strain>DSM 17343 / BCRC 17206 / CCUG 44338 / CIP 107171 / LMG 19424 / R1</strain>
    </source>
</reference>
<proteinExistence type="inferred from homology"/>
<sequence length="131" mass="14098">MSMSDPIADMLTRIRNAQGVQKASVVMPSSKLKVAIAKVLKDEGYIDDYAVQEDGGKAQLSIGLKYYAGRPVIERIERVSKPGLRVYKGRSDIPQVMNGLGVAIISTPQGLMTDRKARATGVGGEVLCYVA</sequence>
<comment type="function">
    <text evidence="1">One of the primary rRNA binding proteins, it binds directly to 16S rRNA central domain where it helps coordinate assembly of the platform of the 30S subunit.</text>
</comment>
<comment type="subunit">
    <text evidence="1">Part of the 30S ribosomal subunit. Contacts proteins S5 and S12.</text>
</comment>
<comment type="similarity">
    <text evidence="1">Belongs to the universal ribosomal protein uS8 family.</text>
</comment>
<gene>
    <name evidence="1" type="primary">rpsH</name>
    <name type="ordered locus">RALTA_A2929</name>
</gene>
<organism>
    <name type="scientific">Cupriavidus taiwanensis (strain DSM 17343 / BCRC 17206 / CCUG 44338 / CIP 107171 / LMG 19424 / R1)</name>
    <name type="common">Ralstonia taiwanensis (strain LMG 19424)</name>
    <dbReference type="NCBI Taxonomy" id="977880"/>
    <lineage>
        <taxon>Bacteria</taxon>
        <taxon>Pseudomonadati</taxon>
        <taxon>Pseudomonadota</taxon>
        <taxon>Betaproteobacteria</taxon>
        <taxon>Burkholderiales</taxon>
        <taxon>Burkholderiaceae</taxon>
        <taxon>Cupriavidus</taxon>
    </lineage>
</organism>
<accession>B3R7F4</accession>
<name>RS8_CUPTR</name>
<keyword id="KW-0687">Ribonucleoprotein</keyword>
<keyword id="KW-0689">Ribosomal protein</keyword>
<keyword id="KW-0694">RNA-binding</keyword>
<keyword id="KW-0699">rRNA-binding</keyword>